<proteinExistence type="inferred from homology"/>
<feature type="chain" id="PRO_0000036258" description="Putative D-alanyl-D-alanine carboxypeptidase">
    <location>
        <begin position="1"/>
        <end position="432"/>
    </location>
</feature>
<feature type="transmembrane region" description="Helical; Signal-anchor" evidence="1">
    <location>
        <begin position="7"/>
        <end position="25"/>
    </location>
</feature>
<dbReference type="EC" id="3.4.16.4" evidence="1"/>
<dbReference type="EMBL" id="AL513382">
    <property type="protein sequence ID" value="CAD07708.1"/>
    <property type="molecule type" value="Genomic_DNA"/>
</dbReference>
<dbReference type="EMBL" id="AE014613">
    <property type="protein sequence ID" value="AAO68099.1"/>
    <property type="molecule type" value="Genomic_DNA"/>
</dbReference>
<dbReference type="RefSeq" id="NP_457012.1">
    <property type="nucleotide sequence ID" value="NC_003198.1"/>
</dbReference>
<dbReference type="SMR" id="Q8Z4S7"/>
<dbReference type="STRING" id="220341.gene:17586612"/>
<dbReference type="MEROPS" id="S12.A03"/>
<dbReference type="KEGG" id="stt:t0381"/>
<dbReference type="KEGG" id="sty:STY2716"/>
<dbReference type="PATRIC" id="fig|220341.7.peg.2753"/>
<dbReference type="eggNOG" id="COG1680">
    <property type="taxonomic scope" value="Bacteria"/>
</dbReference>
<dbReference type="HOGENOM" id="CLU_020027_1_2_6"/>
<dbReference type="OMA" id="AGWAVRY"/>
<dbReference type="OrthoDB" id="119951at2"/>
<dbReference type="Proteomes" id="UP000000541">
    <property type="component" value="Chromosome"/>
</dbReference>
<dbReference type="Proteomes" id="UP000002670">
    <property type="component" value="Chromosome"/>
</dbReference>
<dbReference type="GO" id="GO:0005886">
    <property type="term" value="C:plasma membrane"/>
    <property type="evidence" value="ECO:0007669"/>
    <property type="project" value="UniProtKB-SubCell"/>
</dbReference>
<dbReference type="GO" id="GO:0009002">
    <property type="term" value="F:serine-type D-Ala-D-Ala carboxypeptidase activity"/>
    <property type="evidence" value="ECO:0007669"/>
    <property type="project" value="UniProtKB-UniRule"/>
</dbReference>
<dbReference type="GO" id="GO:0006508">
    <property type="term" value="P:proteolysis"/>
    <property type="evidence" value="ECO:0007669"/>
    <property type="project" value="UniProtKB-KW"/>
</dbReference>
<dbReference type="Gene3D" id="3.40.710.10">
    <property type="entry name" value="DD-peptidase/beta-lactamase superfamily"/>
    <property type="match status" value="1"/>
</dbReference>
<dbReference type="HAMAP" id="MF_01034">
    <property type="entry name" value="S12_YfeW"/>
    <property type="match status" value="1"/>
</dbReference>
<dbReference type="InterPro" id="IPR001466">
    <property type="entry name" value="Beta-lactam-related"/>
</dbReference>
<dbReference type="InterPro" id="IPR012338">
    <property type="entry name" value="Beta-lactam/transpept-like"/>
</dbReference>
<dbReference type="InterPro" id="IPR050789">
    <property type="entry name" value="Diverse_Enzym_Activities"/>
</dbReference>
<dbReference type="InterPro" id="IPR022849">
    <property type="entry name" value="Pept_S12_YfeW/YbbE-like"/>
</dbReference>
<dbReference type="NCBIfam" id="NF002968">
    <property type="entry name" value="PRK03642.1"/>
    <property type="match status" value="1"/>
</dbReference>
<dbReference type="PANTHER" id="PTHR43283">
    <property type="entry name" value="BETA-LACTAMASE-RELATED"/>
    <property type="match status" value="1"/>
</dbReference>
<dbReference type="PANTHER" id="PTHR43283:SF11">
    <property type="entry name" value="BETA-LACTAMASE-RELATED DOMAIN-CONTAINING PROTEIN"/>
    <property type="match status" value="1"/>
</dbReference>
<dbReference type="Pfam" id="PF00144">
    <property type="entry name" value="Beta-lactamase"/>
    <property type="match status" value="1"/>
</dbReference>
<dbReference type="SUPFAM" id="SSF56601">
    <property type="entry name" value="beta-lactamase/transpeptidase-like"/>
    <property type="match status" value="1"/>
</dbReference>
<organism>
    <name type="scientific">Salmonella typhi</name>
    <dbReference type="NCBI Taxonomy" id="90370"/>
    <lineage>
        <taxon>Bacteria</taxon>
        <taxon>Pseudomonadati</taxon>
        <taxon>Pseudomonadota</taxon>
        <taxon>Gammaproteobacteria</taxon>
        <taxon>Enterobacterales</taxon>
        <taxon>Enterobacteriaceae</taxon>
        <taxon>Salmonella</taxon>
    </lineage>
</organism>
<accession>Q8Z4S7</accession>
<name>YFEW_SALTI</name>
<protein>
    <recommendedName>
        <fullName evidence="1">Putative D-alanyl-D-alanine carboxypeptidase</fullName>
        <ecNumber evidence="1">3.4.16.4</ecNumber>
    </recommendedName>
    <alternativeName>
        <fullName evidence="1">DD-carboxypeptidase</fullName>
        <shortName evidence="1">DD-CPase</shortName>
    </alternativeName>
</protein>
<reference key="1">
    <citation type="journal article" date="2001" name="Nature">
        <title>Complete genome sequence of a multiple drug resistant Salmonella enterica serovar Typhi CT18.</title>
        <authorList>
            <person name="Parkhill J."/>
            <person name="Dougan G."/>
            <person name="James K.D."/>
            <person name="Thomson N.R."/>
            <person name="Pickard D."/>
            <person name="Wain J."/>
            <person name="Churcher C.M."/>
            <person name="Mungall K.L."/>
            <person name="Bentley S.D."/>
            <person name="Holden M.T.G."/>
            <person name="Sebaihia M."/>
            <person name="Baker S."/>
            <person name="Basham D."/>
            <person name="Brooks K."/>
            <person name="Chillingworth T."/>
            <person name="Connerton P."/>
            <person name="Cronin A."/>
            <person name="Davis P."/>
            <person name="Davies R.M."/>
            <person name="Dowd L."/>
            <person name="White N."/>
            <person name="Farrar J."/>
            <person name="Feltwell T."/>
            <person name="Hamlin N."/>
            <person name="Haque A."/>
            <person name="Hien T.T."/>
            <person name="Holroyd S."/>
            <person name="Jagels K."/>
            <person name="Krogh A."/>
            <person name="Larsen T.S."/>
            <person name="Leather S."/>
            <person name="Moule S."/>
            <person name="O'Gaora P."/>
            <person name="Parry C."/>
            <person name="Quail M.A."/>
            <person name="Rutherford K.M."/>
            <person name="Simmonds M."/>
            <person name="Skelton J."/>
            <person name="Stevens K."/>
            <person name="Whitehead S."/>
            <person name="Barrell B.G."/>
        </authorList>
    </citation>
    <scope>NUCLEOTIDE SEQUENCE [LARGE SCALE GENOMIC DNA]</scope>
    <source>
        <strain>CT18</strain>
    </source>
</reference>
<reference key="2">
    <citation type="journal article" date="2003" name="J. Bacteriol.">
        <title>Comparative genomics of Salmonella enterica serovar Typhi strains Ty2 and CT18.</title>
        <authorList>
            <person name="Deng W."/>
            <person name="Liou S.-R."/>
            <person name="Plunkett G. III"/>
            <person name="Mayhew G.F."/>
            <person name="Rose D.J."/>
            <person name="Burland V."/>
            <person name="Kodoyianni V."/>
            <person name="Schwartz D.C."/>
            <person name="Blattner F.R."/>
        </authorList>
    </citation>
    <scope>NUCLEOTIDE SEQUENCE [LARGE SCALE GENOMIC DNA]</scope>
    <source>
        <strain>ATCC 700931 / Ty2</strain>
    </source>
</reference>
<gene>
    <name evidence="1" type="primary">yfeW</name>
    <name type="ordered locus">STY2716</name>
    <name type="ordered locus">t0381</name>
</gene>
<comment type="catalytic activity">
    <reaction evidence="1">
        <text>Preferential cleavage: (Ac)2-L-Lys-D-Ala-|-D-Ala. Also transpeptidation of peptidyl-alanyl moieties that are N-acyl substituents of D-alanine.</text>
        <dbReference type="EC" id="3.4.16.4"/>
    </reaction>
</comment>
<comment type="subcellular location">
    <subcellularLocation>
        <location evidence="1">Cell inner membrane</location>
        <topology evidence="1">Single-pass membrane protein</topology>
    </subcellularLocation>
</comment>
<comment type="similarity">
    <text evidence="1">Belongs to the peptidase S12 family. YfeW subfamily.</text>
</comment>
<sequence>MKFTLVATVLLTFSLSAFAVEYPVLTTASPDQVGFDSQKLHRLDGWIQNQIDAGYPSINLLVIKDNHIVLQKAWGYAKKYDGSTLLAHPIRATTNTMYDLASNTKMYATNFALQKLVYEGKIDVNDLVSKYIPGFKDMPGDKIKGKDKLRIIDILHHVAGFPADPQYPNKNVAGKLFSQSKSTTLEMIKKTPLEYQPGSKHIYSDVDYMILGFIIESITAMPLDRYVETTIYKPLGLKHTVFNPLMKGFTPPQIAATELHGNTRDGVIHFPNIRTNTLWGQVHDEKAWYSMGGVSGHAGLFSDTHDMAVLMQVMLNGGGYGNVKLFDNKTVAQFTRRSPEDATFGLGWRVNGNASMTPTFGVLASPQTYGHTGWTGTLTSIDPVNHMAIVILGNRPHSPVANPKVNPNVFVSGLLPAATYGWIVDQIYGSLK</sequence>
<keyword id="KW-0121">Carboxypeptidase</keyword>
<keyword id="KW-0997">Cell inner membrane</keyword>
<keyword id="KW-1003">Cell membrane</keyword>
<keyword id="KW-0378">Hydrolase</keyword>
<keyword id="KW-0472">Membrane</keyword>
<keyword id="KW-0645">Protease</keyword>
<keyword id="KW-0812">Transmembrane</keyword>
<keyword id="KW-1133">Transmembrane helix</keyword>
<evidence type="ECO:0000255" key="1">
    <source>
        <dbReference type="HAMAP-Rule" id="MF_01034"/>
    </source>
</evidence>